<organism>
    <name type="scientific">Homo sapiens</name>
    <name type="common">Human</name>
    <dbReference type="NCBI Taxonomy" id="9606"/>
    <lineage>
        <taxon>Eukaryota</taxon>
        <taxon>Metazoa</taxon>
        <taxon>Chordata</taxon>
        <taxon>Craniata</taxon>
        <taxon>Vertebrata</taxon>
        <taxon>Euteleostomi</taxon>
        <taxon>Mammalia</taxon>
        <taxon>Eutheria</taxon>
        <taxon>Euarchontoglires</taxon>
        <taxon>Primates</taxon>
        <taxon>Haplorrhini</taxon>
        <taxon>Catarrhini</taxon>
        <taxon>Hominidae</taxon>
        <taxon>Homo</taxon>
    </lineage>
</organism>
<gene>
    <name type="primary">PLA2R1</name>
    <name type="synonym">CLEC13C</name>
</gene>
<protein>
    <recommendedName>
        <fullName>Secretory phospholipase A2 receptor</fullName>
        <shortName>PLA2-R</shortName>
        <shortName>PLA2R</shortName>
    </recommendedName>
    <alternativeName>
        <fullName>180 kDa secretory phospholipase A2 receptor</fullName>
    </alternativeName>
    <alternativeName>
        <fullName>C-type lectin domain family 13 member C</fullName>
    </alternativeName>
    <alternativeName>
        <fullName>M-type receptor</fullName>
    </alternativeName>
    <component>
        <recommendedName>
            <fullName>Soluble secretory phospholipase A2 receptor</fullName>
            <shortName>Soluble PLA2-R</shortName>
            <shortName>Soluble PLA2R</shortName>
        </recommendedName>
    </component>
</protein>
<keyword id="KW-0002">3D-structure</keyword>
<keyword id="KW-0025">Alternative splicing</keyword>
<keyword id="KW-1003">Cell membrane</keyword>
<keyword id="KW-1015">Disulfide bond</keyword>
<keyword id="KW-0254">Endocytosis</keyword>
<keyword id="KW-0325">Glycoprotein</keyword>
<keyword id="KW-0430">Lectin</keyword>
<keyword id="KW-0472">Membrane</keyword>
<keyword id="KW-1267">Proteomics identification</keyword>
<keyword id="KW-0675">Receptor</keyword>
<keyword id="KW-1185">Reference proteome</keyword>
<keyword id="KW-0677">Repeat</keyword>
<keyword id="KW-0964">Secreted</keyword>
<keyword id="KW-0732">Signal</keyword>
<keyword id="KW-0812">Transmembrane</keyword>
<keyword id="KW-1133">Transmembrane helix</keyword>
<dbReference type="EMBL" id="U17033">
    <property type="protein sequence ID" value="AAA70110.1"/>
    <property type="molecule type" value="mRNA"/>
</dbReference>
<dbReference type="EMBL" id="U17034">
    <property type="protein sequence ID" value="AAC50163.1"/>
    <property type="molecule type" value="mRNA"/>
</dbReference>
<dbReference type="EMBL" id="AC080166">
    <property type="protein sequence ID" value="AAY24052.1"/>
    <property type="molecule type" value="Genomic_DNA"/>
</dbReference>
<dbReference type="EMBL" id="AC093873">
    <property type="protein sequence ID" value="AAY24190.1"/>
    <property type="molecule type" value="Genomic_DNA"/>
</dbReference>
<dbReference type="EMBL" id="CH471058">
    <property type="protein sequence ID" value="EAX11392.1"/>
    <property type="molecule type" value="Genomic_DNA"/>
</dbReference>
<dbReference type="EMBL" id="CH471058">
    <property type="protein sequence ID" value="EAX11393.1"/>
    <property type="molecule type" value="Genomic_DNA"/>
</dbReference>
<dbReference type="EMBL" id="BC140823">
    <property type="protein sequence ID" value="AAI40824.1"/>
    <property type="molecule type" value="mRNA"/>
</dbReference>
<dbReference type="EMBL" id="D30780">
    <property type="protein sequence ID" value="BAA06444.1"/>
    <property type="molecule type" value="mRNA"/>
</dbReference>
<dbReference type="CCDS" id="CCDS33309.1">
    <molecule id="Q13018-1"/>
</dbReference>
<dbReference type="CCDS" id="CCDS42767.1">
    <molecule id="Q13018-2"/>
</dbReference>
<dbReference type="PIR" id="A56395">
    <property type="entry name" value="A56395"/>
</dbReference>
<dbReference type="PIR" id="B56395">
    <property type="entry name" value="B56395"/>
</dbReference>
<dbReference type="RefSeq" id="NP_001007268.1">
    <molecule id="Q13018-2"/>
    <property type="nucleotide sequence ID" value="NM_001007267.3"/>
</dbReference>
<dbReference type="RefSeq" id="NP_001182570.1">
    <property type="nucleotide sequence ID" value="NM_001195641.1"/>
</dbReference>
<dbReference type="RefSeq" id="NP_031392.3">
    <molecule id="Q13018-1"/>
    <property type="nucleotide sequence ID" value="NM_007366.4"/>
</dbReference>
<dbReference type="RefSeq" id="XP_005246449.1">
    <molecule id="Q13018-1"/>
    <property type="nucleotide sequence ID" value="XM_005246392.5"/>
</dbReference>
<dbReference type="RefSeq" id="XP_011509122.1">
    <molecule id="Q13018-1"/>
    <property type="nucleotide sequence ID" value="XM_011510820.4"/>
</dbReference>
<dbReference type="RefSeq" id="XP_016859087.1">
    <molecule id="Q13018-1"/>
    <property type="nucleotide sequence ID" value="XM_017003598.2"/>
</dbReference>
<dbReference type="RefSeq" id="XP_047299685.1">
    <molecule id="Q13018-1"/>
    <property type="nucleotide sequence ID" value="XM_047443729.1"/>
</dbReference>
<dbReference type="PDB" id="6JLI">
    <property type="method" value="X-ray"/>
    <property type="resolution" value="1.78 A"/>
    <property type="chains" value="A=1108-1234"/>
</dbReference>
<dbReference type="PDB" id="7QSR">
    <property type="method" value="EM"/>
    <property type="resolution" value="3.40 A"/>
    <property type="chains" value="A=21-1397"/>
</dbReference>
<dbReference type="PDBsum" id="6JLI"/>
<dbReference type="PDBsum" id="7QSR"/>
<dbReference type="SASBDB" id="Q13018"/>
<dbReference type="SMR" id="Q13018"/>
<dbReference type="BioGRID" id="116585">
    <property type="interactions" value="3"/>
</dbReference>
<dbReference type="FunCoup" id="Q13018">
    <property type="interactions" value="202"/>
</dbReference>
<dbReference type="IntAct" id="Q13018">
    <property type="interactions" value="2"/>
</dbReference>
<dbReference type="STRING" id="9606.ENSP00000283243"/>
<dbReference type="ChEMBL" id="CHEMBL3713395"/>
<dbReference type="GlyConnect" id="674">
    <property type="glycosylation" value="1 N-Linked glycan (1 site)"/>
</dbReference>
<dbReference type="GlyCosmos" id="Q13018">
    <property type="glycosylation" value="3 sites, 2 glycans"/>
</dbReference>
<dbReference type="GlyGen" id="Q13018">
    <property type="glycosylation" value="3 sites, 2 N-linked glycans (1 site)"/>
</dbReference>
<dbReference type="iPTMnet" id="Q13018"/>
<dbReference type="PhosphoSitePlus" id="Q13018"/>
<dbReference type="BioMuta" id="PLA2R1"/>
<dbReference type="DMDM" id="160419241"/>
<dbReference type="jPOST" id="Q13018"/>
<dbReference type="MassIVE" id="Q13018"/>
<dbReference type="PaxDb" id="9606-ENSP00000283243"/>
<dbReference type="PeptideAtlas" id="Q13018"/>
<dbReference type="ProteomicsDB" id="59106">
    <molecule id="Q13018-1"/>
</dbReference>
<dbReference type="ProteomicsDB" id="59107">
    <molecule id="Q13018-2"/>
</dbReference>
<dbReference type="Antibodypedia" id="2544">
    <property type="antibodies" value="242 antibodies from 25 providers"/>
</dbReference>
<dbReference type="DNASU" id="22925"/>
<dbReference type="Ensembl" id="ENST00000283243.13">
    <molecule id="Q13018-1"/>
    <property type="protein sequence ID" value="ENSP00000283243.7"/>
    <property type="gene ID" value="ENSG00000153246.13"/>
</dbReference>
<dbReference type="Ensembl" id="ENST00000392771.1">
    <molecule id="Q13018-2"/>
    <property type="protein sequence ID" value="ENSP00000376524.1"/>
    <property type="gene ID" value="ENSG00000153246.13"/>
</dbReference>
<dbReference type="GeneID" id="22925"/>
<dbReference type="KEGG" id="hsa:22925"/>
<dbReference type="MANE-Select" id="ENST00000283243.13">
    <property type="protein sequence ID" value="ENSP00000283243.7"/>
    <property type="RefSeq nucleotide sequence ID" value="NM_007366.5"/>
    <property type="RefSeq protein sequence ID" value="NP_031392.3"/>
</dbReference>
<dbReference type="UCSC" id="uc002ube.3">
    <molecule id="Q13018-1"/>
    <property type="organism name" value="human"/>
</dbReference>
<dbReference type="AGR" id="HGNC:9042"/>
<dbReference type="CTD" id="22925"/>
<dbReference type="DisGeNET" id="22925"/>
<dbReference type="GeneCards" id="PLA2R1"/>
<dbReference type="HGNC" id="HGNC:9042">
    <property type="gene designation" value="PLA2R1"/>
</dbReference>
<dbReference type="HPA" id="ENSG00000153246">
    <property type="expression patterns" value="Tissue enhanced (salivary gland, thyroid gland)"/>
</dbReference>
<dbReference type="MalaCards" id="PLA2R1"/>
<dbReference type="MIM" id="604939">
    <property type="type" value="gene"/>
</dbReference>
<dbReference type="neXtProt" id="NX_Q13018"/>
<dbReference type="OpenTargets" id="ENSG00000153246"/>
<dbReference type="PharmGKB" id="PA33369"/>
<dbReference type="VEuPathDB" id="HostDB:ENSG00000153246"/>
<dbReference type="eggNOG" id="KOG4297">
    <property type="taxonomic scope" value="Eukaryota"/>
</dbReference>
<dbReference type="GeneTree" id="ENSGT01050000244842"/>
<dbReference type="HOGENOM" id="CLU_002069_2_0_1"/>
<dbReference type="InParanoid" id="Q13018"/>
<dbReference type="OMA" id="GGDICEH"/>
<dbReference type="OrthoDB" id="5858677at2759"/>
<dbReference type="PAN-GO" id="Q13018">
    <property type="GO annotations" value="3 GO annotations based on evolutionary models"/>
</dbReference>
<dbReference type="PhylomeDB" id="Q13018"/>
<dbReference type="TreeFam" id="TF316663"/>
<dbReference type="PathwayCommons" id="Q13018"/>
<dbReference type="Reactome" id="R-HSA-1482788">
    <property type="pathway name" value="Acyl chain remodelling of PC"/>
</dbReference>
<dbReference type="Reactome" id="R-HSA-1482801">
    <property type="pathway name" value="Acyl chain remodelling of PS"/>
</dbReference>
<dbReference type="Reactome" id="R-HSA-1482839">
    <property type="pathway name" value="Acyl chain remodelling of PE"/>
</dbReference>
<dbReference type="Reactome" id="R-HSA-1482922">
    <property type="pathway name" value="Acyl chain remodelling of PI"/>
</dbReference>
<dbReference type="Reactome" id="R-HSA-1482925">
    <property type="pathway name" value="Acyl chain remodelling of PG"/>
</dbReference>
<dbReference type="Reactome" id="R-HSA-1483166">
    <property type="pathway name" value="Synthesis of PA"/>
</dbReference>
<dbReference type="SignaLink" id="Q13018"/>
<dbReference type="BioGRID-ORCS" id="22925">
    <property type="hits" value="10 hits in 1151 CRISPR screens"/>
</dbReference>
<dbReference type="ChiTaRS" id="PLA2R1">
    <property type="organism name" value="human"/>
</dbReference>
<dbReference type="GenomeRNAi" id="22925"/>
<dbReference type="Pharos" id="Q13018">
    <property type="development level" value="Tbio"/>
</dbReference>
<dbReference type="PRO" id="PR:Q13018"/>
<dbReference type="Proteomes" id="UP000005640">
    <property type="component" value="Chromosome 2"/>
</dbReference>
<dbReference type="RNAct" id="Q13018">
    <property type="molecule type" value="protein"/>
</dbReference>
<dbReference type="Bgee" id="ENSG00000153246">
    <property type="expression patterns" value="Expressed in parotid gland and 157 other cell types or tissues"/>
</dbReference>
<dbReference type="GO" id="GO:0009986">
    <property type="term" value="C:cell surface"/>
    <property type="evidence" value="ECO:0000314"/>
    <property type="project" value="UniProtKB"/>
</dbReference>
<dbReference type="GO" id="GO:0005576">
    <property type="term" value="C:extracellular region"/>
    <property type="evidence" value="ECO:0000250"/>
    <property type="project" value="UniProtKB"/>
</dbReference>
<dbReference type="GO" id="GO:0005886">
    <property type="term" value="C:plasma membrane"/>
    <property type="evidence" value="ECO:0000314"/>
    <property type="project" value="UniProtKB"/>
</dbReference>
<dbReference type="GO" id="GO:0043235">
    <property type="term" value="C:receptor complex"/>
    <property type="evidence" value="ECO:0000314"/>
    <property type="project" value="MGI"/>
</dbReference>
<dbReference type="GO" id="GO:0030246">
    <property type="term" value="F:carbohydrate binding"/>
    <property type="evidence" value="ECO:0007669"/>
    <property type="project" value="UniProtKB-KW"/>
</dbReference>
<dbReference type="GO" id="GO:0019834">
    <property type="term" value="F:phospholipase A2 inhibitor activity"/>
    <property type="evidence" value="ECO:0000250"/>
    <property type="project" value="UniProtKB"/>
</dbReference>
<dbReference type="GO" id="GO:0043274">
    <property type="term" value="F:phospholipase binding"/>
    <property type="evidence" value="ECO:0000353"/>
    <property type="project" value="UniProtKB"/>
</dbReference>
<dbReference type="GO" id="GO:0038023">
    <property type="term" value="F:signaling receptor activity"/>
    <property type="evidence" value="ECO:0000314"/>
    <property type="project" value="UniProtKB"/>
</dbReference>
<dbReference type="GO" id="GO:1900139">
    <property type="term" value="P:negative regulation of arachidonate secretion"/>
    <property type="evidence" value="ECO:0000250"/>
    <property type="project" value="UniProtKB"/>
</dbReference>
<dbReference type="GO" id="GO:0090403">
    <property type="term" value="P:oxidative stress-induced premature senescence"/>
    <property type="evidence" value="ECO:0000315"/>
    <property type="project" value="UniProtKB"/>
</dbReference>
<dbReference type="GO" id="GO:0090238">
    <property type="term" value="P:positive regulation of arachidonate secretion"/>
    <property type="evidence" value="ECO:0000250"/>
    <property type="project" value="UniProtKB"/>
</dbReference>
<dbReference type="GO" id="GO:0001819">
    <property type="term" value="P:positive regulation of cytokine production"/>
    <property type="evidence" value="ECO:0000315"/>
    <property type="project" value="UniProtKB"/>
</dbReference>
<dbReference type="GO" id="GO:0043517">
    <property type="term" value="P:positive regulation of DNA damage response, signal transduction by p53 class mediator"/>
    <property type="evidence" value="ECO:0000315"/>
    <property type="project" value="UniProtKB"/>
</dbReference>
<dbReference type="GO" id="GO:1904635">
    <property type="term" value="P:positive regulation of podocyte apoptotic process"/>
    <property type="evidence" value="ECO:0000315"/>
    <property type="project" value="UniProtKB"/>
</dbReference>
<dbReference type="GO" id="GO:0072593">
    <property type="term" value="P:reactive oxygen species metabolic process"/>
    <property type="evidence" value="ECO:0000314"/>
    <property type="project" value="UniProtKB"/>
</dbReference>
<dbReference type="GO" id="GO:0006898">
    <property type="term" value="P:receptor-mediated endocytosis"/>
    <property type="evidence" value="ECO:0000314"/>
    <property type="project" value="UniProtKB"/>
</dbReference>
<dbReference type="GO" id="GO:0090399">
    <property type="term" value="P:replicative senescence"/>
    <property type="evidence" value="ECO:0000315"/>
    <property type="project" value="UniProtKB"/>
</dbReference>
<dbReference type="CDD" id="cd23410">
    <property type="entry name" value="beta-trefoil_Ricin_PLA2R1"/>
    <property type="match status" value="1"/>
</dbReference>
<dbReference type="CDD" id="cd00037">
    <property type="entry name" value="CLECT"/>
    <property type="match status" value="8"/>
</dbReference>
<dbReference type="CDD" id="cd00062">
    <property type="entry name" value="FN2"/>
    <property type="match status" value="1"/>
</dbReference>
<dbReference type="FunFam" id="2.10.10.10:FF:000001">
    <property type="entry name" value="Fibronectin 1a isoform 1"/>
    <property type="match status" value="1"/>
</dbReference>
<dbReference type="FunFam" id="2.80.10.50:FF:000039">
    <property type="entry name" value="Secretory phospholipase A2 receptor"/>
    <property type="match status" value="1"/>
</dbReference>
<dbReference type="FunFam" id="3.10.100.10:FF:000032">
    <property type="entry name" value="Secretory phospholipase A2 receptor"/>
    <property type="match status" value="1"/>
</dbReference>
<dbReference type="FunFam" id="3.10.100.10:FF:000038">
    <property type="entry name" value="Secretory phospholipase A2 receptor"/>
    <property type="match status" value="1"/>
</dbReference>
<dbReference type="FunFam" id="3.10.100.10:FF:000039">
    <property type="entry name" value="Secretory phospholipase A2 receptor"/>
    <property type="match status" value="1"/>
</dbReference>
<dbReference type="FunFam" id="3.10.100.10:FF:000040">
    <property type="entry name" value="Secretory phospholipase A2 receptor"/>
    <property type="match status" value="1"/>
</dbReference>
<dbReference type="FunFam" id="3.10.100.10:FF:000046">
    <property type="entry name" value="Secretory phospholipase A2 receptor"/>
    <property type="match status" value="1"/>
</dbReference>
<dbReference type="FunFam" id="3.10.100.10:FF:000050">
    <property type="entry name" value="Secretory phospholipase A2 receptor"/>
    <property type="match status" value="1"/>
</dbReference>
<dbReference type="FunFam" id="3.10.100.10:FF:000034">
    <property type="entry name" value="secretory phospholipase A2 receptor"/>
    <property type="match status" value="1"/>
</dbReference>
<dbReference type="FunFam" id="3.10.100.10:FF:000042">
    <property type="entry name" value="secretory phospholipase A2 receptor"/>
    <property type="match status" value="1"/>
</dbReference>
<dbReference type="Gene3D" id="2.80.10.50">
    <property type="match status" value="1"/>
</dbReference>
<dbReference type="Gene3D" id="2.10.10.10">
    <property type="entry name" value="Fibronectin, type II, collagen-binding"/>
    <property type="match status" value="1"/>
</dbReference>
<dbReference type="Gene3D" id="3.10.100.10">
    <property type="entry name" value="Mannose-Binding Protein A, subunit A"/>
    <property type="match status" value="8"/>
</dbReference>
<dbReference type="InterPro" id="IPR001304">
    <property type="entry name" value="C-type_lectin-like"/>
</dbReference>
<dbReference type="InterPro" id="IPR016186">
    <property type="entry name" value="C-type_lectin-like/link_sf"/>
</dbReference>
<dbReference type="InterPro" id="IPR050111">
    <property type="entry name" value="C-type_lectin/snaclec_domain"/>
</dbReference>
<dbReference type="InterPro" id="IPR018378">
    <property type="entry name" value="C-type_lectin_CS"/>
</dbReference>
<dbReference type="InterPro" id="IPR016187">
    <property type="entry name" value="CTDL_fold"/>
</dbReference>
<dbReference type="InterPro" id="IPR000562">
    <property type="entry name" value="FN_type2_dom"/>
</dbReference>
<dbReference type="InterPro" id="IPR036943">
    <property type="entry name" value="FN_type2_sf"/>
</dbReference>
<dbReference type="InterPro" id="IPR035992">
    <property type="entry name" value="Ricin_B-like_lectins"/>
</dbReference>
<dbReference type="InterPro" id="IPR000772">
    <property type="entry name" value="Ricin_B_lectin"/>
</dbReference>
<dbReference type="PANTHER" id="PTHR22803">
    <property type="entry name" value="MANNOSE, PHOSPHOLIPASE, LECTIN RECEPTOR RELATED"/>
    <property type="match status" value="1"/>
</dbReference>
<dbReference type="Pfam" id="PF24562">
    <property type="entry name" value="CysR_MRC2_N"/>
    <property type="match status" value="1"/>
</dbReference>
<dbReference type="Pfam" id="PF00040">
    <property type="entry name" value="fn2"/>
    <property type="match status" value="1"/>
</dbReference>
<dbReference type="Pfam" id="PF00059">
    <property type="entry name" value="Lectin_C"/>
    <property type="match status" value="8"/>
</dbReference>
<dbReference type="PRINTS" id="PR00013">
    <property type="entry name" value="FNTYPEII"/>
</dbReference>
<dbReference type="SMART" id="SM00034">
    <property type="entry name" value="CLECT"/>
    <property type="match status" value="8"/>
</dbReference>
<dbReference type="SMART" id="SM00059">
    <property type="entry name" value="FN2"/>
    <property type="match status" value="1"/>
</dbReference>
<dbReference type="SMART" id="SM00458">
    <property type="entry name" value="RICIN"/>
    <property type="match status" value="1"/>
</dbReference>
<dbReference type="SUPFAM" id="SSF56436">
    <property type="entry name" value="C-type lectin-like"/>
    <property type="match status" value="8"/>
</dbReference>
<dbReference type="SUPFAM" id="SSF50370">
    <property type="entry name" value="Ricin B-like lectins"/>
    <property type="match status" value="1"/>
</dbReference>
<dbReference type="PROSITE" id="PS00615">
    <property type="entry name" value="C_TYPE_LECTIN_1"/>
    <property type="match status" value="3"/>
</dbReference>
<dbReference type="PROSITE" id="PS50041">
    <property type="entry name" value="C_TYPE_LECTIN_2"/>
    <property type="match status" value="8"/>
</dbReference>
<dbReference type="PROSITE" id="PS00023">
    <property type="entry name" value="FN2_1"/>
    <property type="match status" value="1"/>
</dbReference>
<dbReference type="PROSITE" id="PS51092">
    <property type="entry name" value="FN2_2"/>
    <property type="match status" value="1"/>
</dbReference>
<dbReference type="PROSITE" id="PS50231">
    <property type="entry name" value="RICIN_B_LECTIN"/>
    <property type="match status" value="1"/>
</dbReference>
<evidence type="ECO:0000250" key="1"/>
<evidence type="ECO:0000250" key="2">
    <source>
        <dbReference type="UniProtKB" id="Q62028"/>
    </source>
</evidence>
<evidence type="ECO:0000255" key="3"/>
<evidence type="ECO:0000255" key="4">
    <source>
        <dbReference type="PROSITE-ProRule" id="PRU00040"/>
    </source>
</evidence>
<evidence type="ECO:0000255" key="5">
    <source>
        <dbReference type="PROSITE-ProRule" id="PRU00174"/>
    </source>
</evidence>
<evidence type="ECO:0000255" key="6">
    <source>
        <dbReference type="PROSITE-ProRule" id="PRU00479"/>
    </source>
</evidence>
<evidence type="ECO:0000255" key="7">
    <source>
        <dbReference type="PROSITE-ProRule" id="PRU00498"/>
    </source>
</evidence>
<evidence type="ECO:0000269" key="8">
    <source>
    </source>
</evidence>
<evidence type="ECO:0000269" key="9">
    <source>
    </source>
</evidence>
<evidence type="ECO:0000269" key="10">
    <source>
    </source>
</evidence>
<evidence type="ECO:0000269" key="11">
    <source>
    </source>
</evidence>
<evidence type="ECO:0000269" key="12">
    <source>
    </source>
</evidence>
<evidence type="ECO:0000303" key="13">
    <source>
    </source>
</evidence>
<evidence type="ECO:0000305" key="14"/>
<evidence type="ECO:0007829" key="15">
    <source>
        <dbReference type="PDB" id="6JLI"/>
    </source>
</evidence>
<proteinExistence type="evidence at protein level"/>
<feature type="signal peptide" evidence="1">
    <location>
        <begin position="1"/>
        <end position="20"/>
    </location>
</feature>
<feature type="chain" id="PRO_5000144349" description="Secretory phospholipase A2 receptor">
    <location>
        <begin position="21"/>
        <end position="1463"/>
    </location>
</feature>
<feature type="chain" id="PRO_0000311250" description="Soluble secretory phospholipase A2 receptor" evidence="1">
    <location>
        <begin position="21"/>
        <end status="unknown"/>
    </location>
</feature>
<feature type="topological domain" description="Extracellular" evidence="3">
    <location>
        <begin position="21"/>
        <end position="1397"/>
    </location>
</feature>
<feature type="transmembrane region" description="Helical" evidence="3">
    <location>
        <begin position="1398"/>
        <end position="1418"/>
    </location>
</feature>
<feature type="topological domain" description="Cytoplasmic" evidence="3">
    <location>
        <begin position="1419"/>
        <end position="1463"/>
    </location>
</feature>
<feature type="domain" description="Ricin B-type lectin" evidence="5">
    <location>
        <begin position="38"/>
        <end position="161"/>
    </location>
</feature>
<feature type="domain" description="Fibronectin type-II" evidence="6">
    <location>
        <begin position="173"/>
        <end position="221"/>
    </location>
</feature>
<feature type="domain" description="C-type lectin 1" evidence="4">
    <location>
        <begin position="238"/>
        <end position="355"/>
    </location>
</feature>
<feature type="domain" description="C-type lectin 2" evidence="4">
    <location>
        <begin position="385"/>
        <end position="502"/>
    </location>
</feature>
<feature type="domain" description="C-type lectin 3" evidence="4">
    <location>
        <begin position="522"/>
        <end position="643"/>
    </location>
</feature>
<feature type="domain" description="C-type lectin 4" evidence="4">
    <location>
        <begin position="673"/>
        <end position="797"/>
    </location>
</feature>
<feature type="domain" description="C-type lectin 5" evidence="4">
    <location>
        <begin position="819"/>
        <end position="938"/>
    </location>
</feature>
<feature type="domain" description="C-type lectin 6" evidence="4">
    <location>
        <begin position="965"/>
        <end position="1096"/>
    </location>
</feature>
<feature type="domain" description="C-type lectin 7" evidence="4">
    <location>
        <begin position="1121"/>
        <end position="1232"/>
    </location>
</feature>
<feature type="domain" description="C-type lectin 8" evidence="4">
    <location>
        <begin position="1257"/>
        <end position="1378"/>
    </location>
</feature>
<feature type="short sequence motif" description="Endocytosis signal">
    <location>
        <begin position="1436"/>
        <end position="1442"/>
    </location>
</feature>
<feature type="glycosylation site" description="N-linked (GlcNAc...) asparagine" evidence="3">
    <location>
        <position position="93"/>
    </location>
</feature>
<feature type="glycosylation site" description="N-linked (GlcNAc...) asparagine" evidence="3">
    <location>
        <position position="454"/>
    </location>
</feature>
<feature type="glycosylation site" description="N-linked (GlcNAc...) asparagine" evidence="7">
    <location>
        <position position="1123"/>
    </location>
</feature>
<feature type="disulfide bond" evidence="1">
    <location>
        <begin position="51"/>
        <end position="64"/>
    </location>
</feature>
<feature type="disulfide bond" evidence="1">
    <location>
        <begin position="89"/>
        <end position="106"/>
    </location>
</feature>
<feature type="disulfide bond" evidence="1">
    <location>
        <begin position="178"/>
        <end position="204"/>
    </location>
</feature>
<feature type="disulfide bond" evidence="1">
    <location>
        <begin position="192"/>
        <end position="219"/>
    </location>
</feature>
<feature type="disulfide bond" evidence="1">
    <location>
        <begin position="260"/>
        <end position="354"/>
    </location>
</feature>
<feature type="disulfide bond" evidence="1">
    <location>
        <begin position="330"/>
        <end position="346"/>
    </location>
</feature>
<feature type="disulfide bond" evidence="1">
    <location>
        <begin position="406"/>
        <end position="501"/>
    </location>
</feature>
<feature type="disulfide bond" evidence="1">
    <location>
        <begin position="478"/>
        <end position="493"/>
    </location>
</feature>
<feature type="disulfide bond" evidence="1">
    <location>
        <begin position="617"/>
        <end position="634"/>
    </location>
</feature>
<feature type="disulfide bond" evidence="1">
    <location>
        <begin position="699"/>
        <end position="796"/>
    </location>
</feature>
<feature type="disulfide bond" evidence="1">
    <location>
        <begin position="774"/>
        <end position="788"/>
    </location>
</feature>
<feature type="disulfide bond" evidence="1">
    <location>
        <begin position="840"/>
        <end position="937"/>
    </location>
</feature>
<feature type="disulfide bond" evidence="1">
    <location>
        <begin position="914"/>
        <end position="929"/>
    </location>
</feature>
<feature type="disulfide bond" evidence="1">
    <location>
        <begin position="1067"/>
        <end position="1087"/>
    </location>
</feature>
<feature type="disulfide bond" evidence="1">
    <location>
        <begin position="1209"/>
        <end position="1223"/>
    </location>
</feature>
<feature type="disulfide bond" evidence="1">
    <location>
        <begin position="1280"/>
        <end position="1377"/>
    </location>
</feature>
<feature type="disulfide bond" evidence="1">
    <location>
        <begin position="1354"/>
        <end position="1369"/>
    </location>
</feature>
<feature type="splice variant" id="VSP_029493" description="In isoform 2." evidence="13">
    <original>NE</original>
    <variation>SK</variation>
    <location>
        <begin position="1323"/>
        <end position="1324"/>
    </location>
</feature>
<feature type="splice variant" id="VSP_029494" description="In isoform 2." evidence="13">
    <location>
        <begin position="1325"/>
        <end position="1463"/>
    </location>
</feature>
<feature type="sequence variant" id="VAR_037203" description="In dbSNP:rs12327936.">
    <original>R</original>
    <variation>Q</variation>
    <location>
        <position position="142"/>
    </location>
</feature>
<feature type="sequence variant" id="VAR_037204" description="In dbSNP:rs13394676.">
    <original>P</original>
    <variation>S</variation>
    <location>
        <position position="177"/>
    </location>
</feature>
<feature type="sequence variant" id="VAR_037205" description="In dbSNP:rs965290.">
    <original>I</original>
    <variation>V</variation>
    <location>
        <position position="279"/>
    </location>
</feature>
<feature type="sequence variant" id="VAR_037206" description="In dbSNP:rs3749117." evidence="10">
    <original>M</original>
    <variation>V</variation>
    <location>
        <position position="292"/>
    </location>
</feature>
<feature type="sequence variant" id="VAR_037207" description="In dbSNP:rs35771982." evidence="10">
    <original>H</original>
    <variation>D</variation>
    <location>
        <position position="300"/>
    </location>
</feature>
<feature type="sequence variant" id="VAR_061354" description="In dbSNP:rs34916310.">
    <original>A</original>
    <variation>E</variation>
    <location>
        <position position="370"/>
    </location>
</feature>
<feature type="sequence variant" id="VAR_037208" description="In dbSNP:rs33985939.">
    <original>R</original>
    <variation>H</variation>
    <location>
        <position position="404"/>
    </location>
</feature>
<feature type="sequence variant" id="VAR_037209" description="In dbSNP:rs3828323.">
    <original>G</original>
    <variation>S</variation>
    <location>
        <position position="1106"/>
    </location>
</feature>
<feature type="sequence conflict" description="In Ref. 1; AAA70110/AAC50163." evidence="14" ref="1">
    <original>APR</original>
    <variation>GAA</variation>
    <location>
        <begin position="15"/>
        <end position="17"/>
    </location>
</feature>
<feature type="sequence conflict" description="In Ref. 1; AAA70110/AAC50163." evidence="14" ref="1">
    <original>ENC</original>
    <variation>GRTGS</variation>
    <location>
        <begin position="62"/>
        <end position="64"/>
    </location>
</feature>
<feature type="sequence conflict" description="In Ref. 1; AAA70110/AAC50163." evidence="14" ref="1">
    <original>RHG</original>
    <variation>ETC</variation>
    <location>
        <begin position="521"/>
        <end position="523"/>
    </location>
</feature>
<feature type="sequence conflict" description="In Ref. 1; AAA70110/AAC50163." evidence="14" ref="1">
    <original>S</original>
    <variation>P</variation>
    <location>
        <position position="724"/>
    </location>
</feature>
<feature type="sequence conflict" description="In Ref. 1; AAA70110/AAC50163." evidence="14" ref="1">
    <original>A</original>
    <variation>P</variation>
    <location>
        <position position="779"/>
    </location>
</feature>
<feature type="sequence conflict" description="In Ref. 1; AAA70110/AAC50163." evidence="14" ref="1">
    <original>E</original>
    <variation>D</variation>
    <location>
        <position position="1224"/>
    </location>
</feature>
<feature type="sequence conflict" description="In Ref. 1; AAA70110." evidence="14" ref="1">
    <original>S</original>
    <variation>K</variation>
    <location>
        <position position="1263"/>
    </location>
</feature>
<feature type="strand" evidence="15">
    <location>
        <begin position="1118"/>
        <end position="1121"/>
    </location>
</feature>
<feature type="strand" evidence="15">
    <location>
        <begin position="1124"/>
        <end position="1133"/>
    </location>
</feature>
<feature type="helix" evidence="15">
    <location>
        <begin position="1135"/>
        <end position="1144"/>
    </location>
</feature>
<feature type="helix" evidence="15">
    <location>
        <begin position="1155"/>
        <end position="1168"/>
    </location>
</feature>
<feature type="strand" evidence="15">
    <location>
        <begin position="1172"/>
        <end position="1177"/>
    </location>
</feature>
<feature type="strand" evidence="15">
    <location>
        <begin position="1198"/>
        <end position="1200"/>
    </location>
</feature>
<feature type="helix" evidence="15">
    <location>
        <begin position="1202"/>
        <end position="1204"/>
    </location>
</feature>
<feature type="strand" evidence="15">
    <location>
        <begin position="1208"/>
        <end position="1212"/>
    </location>
</feature>
<feature type="strand" evidence="15">
    <location>
        <begin position="1218"/>
        <end position="1221"/>
    </location>
</feature>
<feature type="strand" evidence="15">
    <location>
        <begin position="1227"/>
        <end position="1233"/>
    </location>
</feature>
<name>PLA2R_HUMAN</name>
<accession>Q13018</accession>
<accession>B2RTU9</accession>
<accession>D3DPB1</accession>
<accession>Q13019</accession>
<accession>Q15095</accession>
<accession>Q53R45</accession>
<accession>Q53RR7</accession>
<reference key="1">
    <citation type="journal article" date="1995" name="J. Biol. Chem.">
        <title>The human 180-kDa receptor for secretory phospholipases A2. Molecular cloning, identification of a secreted soluble form, expression, and chromosomal localization.</title>
        <authorList>
            <person name="Ancian P."/>
            <person name="Lambeau G."/>
            <person name="Mattei M.-G."/>
            <person name="Lazdunski M."/>
        </authorList>
    </citation>
    <scope>NUCLEOTIDE SEQUENCE [MRNA] (ISOFORMS 1 AND 2)</scope>
    <scope>FUNCTION</scope>
    <scope>TISSUE SPECIFICITY</scope>
    <scope>VARIANTS VAL-292 AND ASP-300</scope>
    <scope>INTERACTION WITH PLA2G1B</scope>
    <source>
        <tissue>Kidney</tissue>
    </source>
</reference>
<reference key="2">
    <citation type="journal article" date="2005" name="Nature">
        <title>Generation and annotation of the DNA sequences of human chromosomes 2 and 4.</title>
        <authorList>
            <person name="Hillier L.W."/>
            <person name="Graves T.A."/>
            <person name="Fulton R.S."/>
            <person name="Fulton L.A."/>
            <person name="Pepin K.H."/>
            <person name="Minx P."/>
            <person name="Wagner-McPherson C."/>
            <person name="Layman D."/>
            <person name="Wylie K."/>
            <person name="Sekhon M."/>
            <person name="Becker M.C."/>
            <person name="Fewell G.A."/>
            <person name="Delehaunty K.D."/>
            <person name="Miner T.L."/>
            <person name="Nash W.E."/>
            <person name="Kremitzki C."/>
            <person name="Oddy L."/>
            <person name="Du H."/>
            <person name="Sun H."/>
            <person name="Bradshaw-Cordum H."/>
            <person name="Ali J."/>
            <person name="Carter J."/>
            <person name="Cordes M."/>
            <person name="Harris A."/>
            <person name="Isak A."/>
            <person name="van Brunt A."/>
            <person name="Nguyen C."/>
            <person name="Du F."/>
            <person name="Courtney L."/>
            <person name="Kalicki J."/>
            <person name="Ozersky P."/>
            <person name="Abbott S."/>
            <person name="Armstrong J."/>
            <person name="Belter E.A."/>
            <person name="Caruso L."/>
            <person name="Cedroni M."/>
            <person name="Cotton M."/>
            <person name="Davidson T."/>
            <person name="Desai A."/>
            <person name="Elliott G."/>
            <person name="Erb T."/>
            <person name="Fronick C."/>
            <person name="Gaige T."/>
            <person name="Haakenson W."/>
            <person name="Haglund K."/>
            <person name="Holmes A."/>
            <person name="Harkins R."/>
            <person name="Kim K."/>
            <person name="Kruchowski S.S."/>
            <person name="Strong C.M."/>
            <person name="Grewal N."/>
            <person name="Goyea E."/>
            <person name="Hou S."/>
            <person name="Levy A."/>
            <person name="Martinka S."/>
            <person name="Mead K."/>
            <person name="McLellan M.D."/>
            <person name="Meyer R."/>
            <person name="Randall-Maher J."/>
            <person name="Tomlinson C."/>
            <person name="Dauphin-Kohlberg S."/>
            <person name="Kozlowicz-Reilly A."/>
            <person name="Shah N."/>
            <person name="Swearengen-Shahid S."/>
            <person name="Snider J."/>
            <person name="Strong J.T."/>
            <person name="Thompson J."/>
            <person name="Yoakum M."/>
            <person name="Leonard S."/>
            <person name="Pearman C."/>
            <person name="Trani L."/>
            <person name="Radionenko M."/>
            <person name="Waligorski J.E."/>
            <person name="Wang C."/>
            <person name="Rock S.M."/>
            <person name="Tin-Wollam A.-M."/>
            <person name="Maupin R."/>
            <person name="Latreille P."/>
            <person name="Wendl M.C."/>
            <person name="Yang S.-P."/>
            <person name="Pohl C."/>
            <person name="Wallis J.W."/>
            <person name="Spieth J."/>
            <person name="Bieri T.A."/>
            <person name="Berkowicz N."/>
            <person name="Nelson J.O."/>
            <person name="Osborne J."/>
            <person name="Ding L."/>
            <person name="Meyer R."/>
            <person name="Sabo A."/>
            <person name="Shotland Y."/>
            <person name="Sinha P."/>
            <person name="Wohldmann P.E."/>
            <person name="Cook L.L."/>
            <person name="Hickenbotham M.T."/>
            <person name="Eldred J."/>
            <person name="Williams D."/>
            <person name="Jones T.A."/>
            <person name="She X."/>
            <person name="Ciccarelli F.D."/>
            <person name="Izaurralde E."/>
            <person name="Taylor J."/>
            <person name="Schmutz J."/>
            <person name="Myers R.M."/>
            <person name="Cox D.R."/>
            <person name="Huang X."/>
            <person name="McPherson J.D."/>
            <person name="Mardis E.R."/>
            <person name="Clifton S.W."/>
            <person name="Warren W.C."/>
            <person name="Chinwalla A.T."/>
            <person name="Eddy S.R."/>
            <person name="Marra M.A."/>
            <person name="Ovcharenko I."/>
            <person name="Furey T.S."/>
            <person name="Miller W."/>
            <person name="Eichler E.E."/>
            <person name="Bork P."/>
            <person name="Suyama M."/>
            <person name="Torrents D."/>
            <person name="Waterston R.H."/>
            <person name="Wilson R.K."/>
        </authorList>
    </citation>
    <scope>NUCLEOTIDE SEQUENCE [LARGE SCALE GENOMIC DNA]</scope>
</reference>
<reference key="3">
    <citation type="submission" date="2005-09" db="EMBL/GenBank/DDBJ databases">
        <authorList>
            <person name="Mural R.J."/>
            <person name="Istrail S."/>
            <person name="Sutton G.G."/>
            <person name="Florea L."/>
            <person name="Halpern A.L."/>
            <person name="Mobarry C.M."/>
            <person name="Lippert R."/>
            <person name="Walenz B."/>
            <person name="Shatkay H."/>
            <person name="Dew I."/>
            <person name="Miller J.R."/>
            <person name="Flanigan M.J."/>
            <person name="Edwards N.J."/>
            <person name="Bolanos R."/>
            <person name="Fasulo D."/>
            <person name="Halldorsson B.V."/>
            <person name="Hannenhalli S."/>
            <person name="Turner R."/>
            <person name="Yooseph S."/>
            <person name="Lu F."/>
            <person name="Nusskern D.R."/>
            <person name="Shue B.C."/>
            <person name="Zheng X.H."/>
            <person name="Zhong F."/>
            <person name="Delcher A.L."/>
            <person name="Huson D.H."/>
            <person name="Kravitz S.A."/>
            <person name="Mouchard L."/>
            <person name="Reinert K."/>
            <person name="Remington K.A."/>
            <person name="Clark A.G."/>
            <person name="Waterman M.S."/>
            <person name="Eichler E.E."/>
            <person name="Adams M.D."/>
            <person name="Hunkapiller M.W."/>
            <person name="Myers E.W."/>
            <person name="Venter J.C."/>
        </authorList>
    </citation>
    <scope>NUCLEOTIDE SEQUENCE [LARGE SCALE GENOMIC DNA]</scope>
</reference>
<reference key="4">
    <citation type="journal article" date="2004" name="Genome Res.">
        <title>The status, quality, and expansion of the NIH full-length cDNA project: the Mammalian Gene Collection (MGC).</title>
        <authorList>
            <consortium name="The MGC Project Team"/>
        </authorList>
    </citation>
    <scope>NUCLEOTIDE SEQUENCE [LARGE SCALE MRNA] (ISOFORM 1)</scope>
    <source>
        <tissue>Brain</tissue>
    </source>
</reference>
<reference key="5">
    <citation type="journal article" date="1994" name="Eur. J. Biochem.">
        <title>Structural comparison of phospholipase-A2-binding regions in phospholipase-A2 receptors from various mammals.</title>
        <authorList>
            <person name="Higashino K."/>
            <person name="Ishizaki J."/>
            <person name="Kishino J."/>
            <person name="Ohara O."/>
            <person name="Arita H."/>
        </authorList>
    </citation>
    <scope>NUCLEOTIDE SEQUENCE [MRNA] OF 532-942</scope>
    <scope>TISSUE SPECIFICITY</scope>
    <source>
        <tissue>Placenta</tissue>
    </source>
</reference>
<reference key="6">
    <citation type="journal article" date="1998" name="Placenta">
        <title>Distribution of the phospholipase A2 receptor messenger RNA in human gestational tissues.</title>
        <authorList>
            <person name="Moses E.K."/>
            <person name="Freed K.A."/>
            <person name="Brennecke S.P."/>
            <person name="Rice G.E."/>
        </authorList>
    </citation>
    <scope>TISSUE SPECIFICITY</scope>
</reference>
<reference key="7">
    <citation type="journal article" date="2005" name="J. Immunol.">
        <title>Activation of cytokine production by secreted phospholipase A2 in human lung macrophages expressing the M-type receptor.</title>
        <authorList>
            <person name="Granata F."/>
            <person name="Petraroli A."/>
            <person name="Boilard E."/>
            <person name="Bezzine S."/>
            <person name="Bollinger J."/>
            <person name="Del Vecchio L."/>
            <person name="Gelb M.H."/>
            <person name="Lambeau G."/>
            <person name="Marone G."/>
            <person name="Triggiani M."/>
        </authorList>
    </citation>
    <scope>FUNCTION</scope>
    <scope>TISSUE SPECIFICITY</scope>
</reference>
<reference key="8">
    <citation type="journal article" date="2014" name="Sci. Rep.">
        <title>sPLA2 IB induces human podocyte apoptosis via the M-type phospholipase A2 receptor.</title>
        <authorList>
            <person name="Pan Y."/>
            <person name="Wan J."/>
            <person name="Liu Y."/>
            <person name="Yang Q."/>
            <person name="Liang W."/>
            <person name="Singhal P.C."/>
            <person name="Saleem M.A."/>
            <person name="Ding G."/>
        </authorList>
    </citation>
    <scope>FUNCTION</scope>
    <scope>TISSUE SPECIFICITY</scope>
</reference>
<sequence>MLLSPSLLLLLLLGAPRGCAEGVAAALTPERLLEWQDKGIFVIQSESLKKCIQAGKSVLTLENCKQANKHMLWKWVSNHGLFNIGGSGCLGLNFSAPEQPLSLYECDSTLVSLRWRCNRKMITGPLQYSVQVAHDNTVVASRKYIHKWISYGSGGGDICEYLHKDLHTIKGNTHGMPCMFPFQYNHQWHHECTREGREDDLLWCATTSRYERDEKWGFCPDPTSAEVGCDTIWEKDLNSHICYQFNLLSSLSWSEAHSSCQMQGGTLLSITDETEENFIREHMSSKTVEVWMGLNQLDEHAGWQWSDGTPLNYLNWSPEVNFEPFVEDHCGTFSSFMPSAWRSRDCESTLPYICKKYLNHIDHEIVEKDAWKYYATHCEPGWNPYNRNCYKLQKEEKTWHEALRSCQADNSALIDITSLAEVEFLVTLLGDENASETWIGLSSNKIPVSFEWSNDSSVIFTNWHTLEPHIFPNRSQLCVSAEQSEGHWKVKNCEERLFYICKKAGHVLSDAESGCQEGWERHGGFCYKIDTVLRSFDQASSGYYCPPALVTITNRFEQAFITSLISSVVKMKDSYFWIALQDQNDTGEYTWKPVGQKPEPVQYTHWNTHQPRYSGGCVAMRGRHPLGRWEVKHCRHFKAMSLCKQPVENQEKAEYEERWPFHPCYLDWESEPGLASCFKVFHSEKVLMKRTWREAEAFCEEFGAHLASFAHIEEENFVNELLHSKFNWTEERQFWIGFNKRNPLNAGSWEWSDRTPVVSSFLDNTYFGEDARNCAVYKANKTLLPLHCGSKREWICKIPRDVKPKIPFWYQYDVPWLFYQDAEYLFHTFASEWLNFEFVCSWLHSDLLTIHSAHEQEFIHSKIKALSKYGASWWIGLQEERANDEFRWRDGTPVIYQNWDTGRERTVNNQSQRCGFISSITGLWGSEECSVSMPSICKRKKVWLIEKKKDTPKQHGTCPKGWLYFNYKCLLLNIPKDPSSWKNWTHAQHFCAEEGGTLVAIESEVEQAFITMNLFGQTTSVWIGLQNDDYETWLNGKPVVYSNWSPFDIINIPSHNTTEVQKHIPLCALLSSNPNFHFTGKWYFEDCGKEGYGFVCEKMQDTSGHGVNTSDMYPMPNTLEYGNRTYKIINANMTWYAAIKTCLMHKAQLVSITDQYHQSFLTVVLNRLGYAHWIGLFTTDNGLNFDWSDGTKSSFTFWKDEESSLLGDCVFADSNGRWHSTACESFLQGAICHVPPETRQSEHPELCSETSIPWIKFKSNCYSFSTVLDSMSFEAAHEFCKKEGSNLLTIKDEAENAFLLEELFAFGSSVQMVWLNAQFDGNNETIKWFDGTPTDQSNWGIRKPDTDYFKPHHCVALRIPEGLWQLSPCQEKKGFICKMEADIHTAEALPEKGPSHSIIPLAVVLTLIVIVAICTLSFCIYKHNGGFFRRLAGFRNPYYPATNFSTVYLEENILISDLEKSDQ</sequence>
<comment type="function">
    <text evidence="8 9 10">Receptor for secretory phospholipase A2 (sPLA2). Acts as a receptor for phospholipase sPLA2-IB/PLA2G1B but not sPLA2-IIA/PLA2G2A. Also able to bind to snake PA2-like toxins. Although its precise function remains unclear, binding of sPLA2 to its receptor participates in both positive and negative regulation of sPLA2 functions as well as clearance of sPLA2. Binding of sPLA2-IB/PLA2G1B induces various effects depending on the cell type, such as activation of the mitogen-activated protein kinase (MAPK) cascade to induce cell proliferation, the production of lipid mediators, selective release of arachidonic acid in bone marrow-derived mast cells. In neutrophils, binding of sPLA2-IB/PLA2G1B can activate p38 MAPK to stimulate elastase release and cell adhesion. May be involved in responses in pro-inflammatory cytokine productions during endotoxic shock. Also has endocytic properties and rapidly internalizes sPLA2 ligands, which is particularly important for the clearance of extracellular sPLA2s to protect their potent enzymatic activities. The soluble secretory phospholipase A2 receptor form is circulating and acts as a negative regulator of sPLA2 functions by blocking the biological functions of sPLA2-IB/PLA2G1B (PubMed:15611272, PubMed:7721806). In podocytes, binding of sPLA2-IB/PLA2G1B can regulate podocyte survival and glomerular homeostasis (PubMed:25335547).</text>
</comment>
<comment type="subunit">
    <text evidence="2 10">Interacts with sPLA2-IB/PLA2G1B; this interaction mediates intracellular signaling as well as clearance of extracellular sPLA2-IB/PLA2G1B via endocytotic pathway (PubMed:7721806). Interacts with sPLA2-X/PLA2G10; this interaction mediates sPLA2-X/PLA2G10 clearance and inactivation (By similarity).</text>
</comment>
<comment type="subcellular location">
    <subcellularLocation>
        <location evidence="1">Cell membrane</location>
        <topology evidence="1">Single-pass type I membrane protein</topology>
    </subcellularLocation>
</comment>
<comment type="subcellular location">
    <molecule>Soluble secretory phospholipase A2 receptor</molecule>
    <subcellularLocation>
        <location evidence="1">Secreted</location>
    </subcellularLocation>
</comment>
<comment type="subcellular location">
    <molecule>Isoform 2</molecule>
    <subcellularLocation>
        <location evidence="14">Secreted</location>
    </subcellularLocation>
</comment>
<comment type="alternative products">
    <event type="alternative splicing"/>
    <isoform>
        <id>Q13018-1</id>
        <name>1</name>
        <sequence type="displayed"/>
    </isoform>
    <isoform>
        <id>Q13018-2</id>
        <name>2</name>
        <sequence type="described" ref="VSP_029493 VSP_029494"/>
    </isoform>
</comment>
<comment type="tissue specificity">
    <text evidence="8 9 10 11 12">Expressed in podocytes (at protein level) (PubMed:25335547). Present in lung macrophage (at protein level). Highly expressed in kidney. Also expressed in pancreas, amnion, choriodecidua and placenta. Isoform 2 is expressed at much lower level.</text>
</comment>
<comment type="domain">
    <text>C-type lectin domains 3-5 mediate the interaction with phospholipase PLA2G1B.</text>
</comment>
<comment type="domain">
    <text evidence="1">The endocytosis signal probably mediates endocytosis via clathrin-coated pits.</text>
</comment>
<comment type="PTM">
    <text evidence="1">The secretory phospholipase A2 receptor form may be produced by the action of metalloproteinases. It contains all extracellular domains and only lacks transmembrane and cytosolic regions. It is however unclear whether this form is produced by proteolytic cleavage as suggested by some experiments, or by alternative splicing, as in the case of isoform 2 that shares all characteristics of secretory phospholipase A2 receptor form (By similarity).</text>
</comment>
<comment type="online information" name="Functional Glycomics Gateway - Glycan Binding">
    <link uri="http://www.functionalglycomics.org/glycomics/GBPServlet?&amp;operationType=view&amp;cbpId=cbp_hum_Ctlect_253"/>
    <text>Phospholipase A2 receptor</text>
</comment>